<keyword id="KW-0046">Antibiotic resistance</keyword>
<keyword id="KW-0067">ATP-binding</keyword>
<keyword id="KW-1003">Cell membrane</keyword>
<keyword id="KW-0963">Cytoplasm</keyword>
<keyword id="KW-0418">Kinase</keyword>
<keyword id="KW-0472">Membrane</keyword>
<keyword id="KW-0547">Nucleotide-binding</keyword>
<keyword id="KW-0597">Phosphoprotein</keyword>
<keyword id="KW-1185">Reference proteome</keyword>
<keyword id="KW-0723">Serine/threonine-protein kinase</keyword>
<keyword id="KW-0802">TPR repeat</keyword>
<keyword id="KW-0808">Transferase</keyword>
<keyword id="KW-0843">Virulence</keyword>
<name>PKNG_MYCTO</name>
<organism>
    <name type="scientific">Mycobacterium tuberculosis (strain CDC 1551 / Oshkosh)</name>
    <dbReference type="NCBI Taxonomy" id="83331"/>
    <lineage>
        <taxon>Bacteria</taxon>
        <taxon>Bacillati</taxon>
        <taxon>Actinomycetota</taxon>
        <taxon>Actinomycetes</taxon>
        <taxon>Mycobacteriales</taxon>
        <taxon>Mycobacteriaceae</taxon>
        <taxon>Mycobacterium</taxon>
        <taxon>Mycobacterium tuberculosis complex</taxon>
    </lineage>
</organism>
<reference key="1">
    <citation type="journal article" date="2002" name="J. Bacteriol.">
        <title>Whole-genome comparison of Mycobacterium tuberculosis clinical and laboratory strains.</title>
        <authorList>
            <person name="Fleischmann R.D."/>
            <person name="Alland D."/>
            <person name="Eisen J.A."/>
            <person name="Carpenter L."/>
            <person name="White O."/>
            <person name="Peterson J.D."/>
            <person name="DeBoy R.T."/>
            <person name="Dodson R.J."/>
            <person name="Gwinn M.L."/>
            <person name="Haft D.H."/>
            <person name="Hickey E.K."/>
            <person name="Kolonay J.F."/>
            <person name="Nelson W.C."/>
            <person name="Umayam L.A."/>
            <person name="Ermolaeva M.D."/>
            <person name="Salzberg S.L."/>
            <person name="Delcher A."/>
            <person name="Utterback T.R."/>
            <person name="Weidman J.F."/>
            <person name="Khouri H.M."/>
            <person name="Gill J."/>
            <person name="Mikula A."/>
            <person name="Bishai W."/>
            <person name="Jacobs W.R. Jr."/>
            <person name="Venter J.C."/>
            <person name="Fraser C.M."/>
        </authorList>
    </citation>
    <scope>NUCLEOTIDE SEQUENCE [LARGE SCALE GENOMIC DNA]</scope>
    <source>
        <strain>CDC 1551 / Oshkosh</strain>
    </source>
</reference>
<gene>
    <name type="primary">pknG</name>
    <name type="ordered locus">MT0423</name>
</gene>
<evidence type="ECO:0000250" key="1"/>
<evidence type="ECO:0000255" key="2">
    <source>
        <dbReference type="PROSITE-ProRule" id="PRU00159"/>
    </source>
</evidence>
<evidence type="ECO:0000255" key="3">
    <source>
        <dbReference type="PROSITE-ProRule" id="PRU10027"/>
    </source>
</evidence>
<evidence type="ECO:0000256" key="4">
    <source>
        <dbReference type="SAM" id="MobiDB-lite"/>
    </source>
</evidence>
<evidence type="ECO:0000305" key="5"/>
<protein>
    <recommendedName>
        <fullName>Serine/threonine-protein kinase PknG</fullName>
        <ecNumber>2.7.11.1</ecNumber>
    </recommendedName>
</protein>
<accession>P9WI72</accession>
<accession>L0T3M0</accession>
<accession>P65728</accession>
<accession>P96256</accession>
<comment type="function">
    <text evidence="1">Phosphorylates GarA. May play a role in metabolic regulation via control of the phosphorylation status of GarA. Plays a crucial role in the survival of mycobacteria within host macrophages, by blocking the intracellular degradation of mycobacteria in lysosomes. Required for intrinsic antibiotic resistance (By similarity).</text>
</comment>
<comment type="catalytic activity">
    <reaction>
        <text>L-seryl-[protein] + ATP = O-phospho-L-seryl-[protein] + ADP + H(+)</text>
        <dbReference type="Rhea" id="RHEA:17989"/>
        <dbReference type="Rhea" id="RHEA-COMP:9863"/>
        <dbReference type="Rhea" id="RHEA-COMP:11604"/>
        <dbReference type="ChEBI" id="CHEBI:15378"/>
        <dbReference type="ChEBI" id="CHEBI:29999"/>
        <dbReference type="ChEBI" id="CHEBI:30616"/>
        <dbReference type="ChEBI" id="CHEBI:83421"/>
        <dbReference type="ChEBI" id="CHEBI:456216"/>
        <dbReference type="EC" id="2.7.11.1"/>
    </reaction>
</comment>
<comment type="catalytic activity">
    <reaction>
        <text>L-threonyl-[protein] + ATP = O-phospho-L-threonyl-[protein] + ADP + H(+)</text>
        <dbReference type="Rhea" id="RHEA:46608"/>
        <dbReference type="Rhea" id="RHEA-COMP:11060"/>
        <dbReference type="Rhea" id="RHEA-COMP:11605"/>
        <dbReference type="ChEBI" id="CHEBI:15378"/>
        <dbReference type="ChEBI" id="CHEBI:30013"/>
        <dbReference type="ChEBI" id="CHEBI:30616"/>
        <dbReference type="ChEBI" id="CHEBI:61977"/>
        <dbReference type="ChEBI" id="CHEBI:456216"/>
        <dbReference type="EC" id="2.7.11.1"/>
    </reaction>
</comment>
<comment type="subunit">
    <text evidence="1">Homodimer. Interacts with the FHA domain of GarA (By similarity).</text>
</comment>
<comment type="subcellular location">
    <subcellularLocation>
        <location evidence="1">Cytoplasm</location>
    </subcellularLocation>
    <subcellularLocation>
        <location evidence="1">Cell membrane</location>
    </subcellularLocation>
    <text evidence="1">Also detected in growth media, suggesting that it can be translocated into host macrophages under specific conditions.</text>
</comment>
<comment type="PTM">
    <text evidence="1">Autophosphorylated.</text>
</comment>
<comment type="similarity">
    <text evidence="2">Belongs to the protein kinase superfamily. Ser/Thr protein kinase family.</text>
</comment>
<comment type="sequence caution" evidence="5">
    <conflict type="erroneous initiation">
        <sequence resource="EMBL-CDS" id="AAK44647"/>
    </conflict>
    <text>Extended N-terminus.</text>
</comment>
<sequence length="750" mass="81577">MAKASETERSGPGTQPADAQTATSATVRPLSTQAVFRPDFGDEDNFPHPTLGPDTEPQDRMATTSRVRPPVRRLGGGLVEIPRAPDIDPLEALMTNPVVPESKRFCWNCGRPVGRSDSETKGASEGWCPYCGSPYSFLPQLNPGDIVAGQYEVKGCIAHGGLGWIYLALDRNVNGRPVVLKGLVHSGDAEAQAMAMAERQFLAEVVHPSIVQIFNFVEHTDRHGDPVGYIVMEYVGGQSLKRSKGQKLPVAEAIAYLLEILPALSYLHSIGLVYNDLKPENIMLTEEQLKLIDLGAVSRINSFGYLYGTPGFQAPEIVRTGPTVATDIYTVGRTLAALTLDLPTRNGRYVDGLPEDDPVLKTYDSYGRLLRRAIDPDPRQRFTTAEEMSAQLTGVLREVVAQDTGVPRPGLSTIFSPSRSTFGVDLLVAHTDVYLDGQVHAEKLTANEIVTALSVPLVDPTDVAASVLQATVLSQPVQTLDSLRAARHGALDADGVDFSESVELPLMEVRALLDLGDVAKATRKLDDLAERVGWRWRLVWYRAVAELLTGDYDSATKHFTEVLDTFPGELAPKLALAATAELAGNTDEHKFYQTVWSTNDGVISAAFGLARARSAEGDRVGAVRTLDEVPPTSRHFTTARLTSAVTLLSGRSTSEVTEEQIRDAARRVEALPPTEPRVLQIRALVLGGALDWLKDNKASTNHILGFPFTSHGLRLGVEASLRSLARVAPTQRHRYTLVDMANKVRPTSTF</sequence>
<proteinExistence type="inferred from homology"/>
<dbReference type="EC" id="2.7.11.1"/>
<dbReference type="EMBL" id="AE000516">
    <property type="protein sequence ID" value="AAK44647.1"/>
    <property type="status" value="ALT_INIT"/>
    <property type="molecule type" value="Genomic_DNA"/>
</dbReference>
<dbReference type="PIR" id="H70628">
    <property type="entry name" value="H70628"/>
</dbReference>
<dbReference type="RefSeq" id="WP_003402100.1">
    <property type="nucleotide sequence ID" value="NZ_KK341227.1"/>
</dbReference>
<dbReference type="SMR" id="P9WI72"/>
<dbReference type="KEGG" id="mtc:MT0423"/>
<dbReference type="PATRIC" id="fig|83331.31.peg.452"/>
<dbReference type="HOGENOM" id="CLU_011707_0_0_11"/>
<dbReference type="Proteomes" id="UP000001020">
    <property type="component" value="Chromosome"/>
</dbReference>
<dbReference type="GO" id="GO:0005737">
    <property type="term" value="C:cytoplasm"/>
    <property type="evidence" value="ECO:0007669"/>
    <property type="project" value="UniProtKB-SubCell"/>
</dbReference>
<dbReference type="GO" id="GO:0005886">
    <property type="term" value="C:plasma membrane"/>
    <property type="evidence" value="ECO:0007669"/>
    <property type="project" value="UniProtKB-SubCell"/>
</dbReference>
<dbReference type="GO" id="GO:0005524">
    <property type="term" value="F:ATP binding"/>
    <property type="evidence" value="ECO:0007669"/>
    <property type="project" value="UniProtKB-KW"/>
</dbReference>
<dbReference type="GO" id="GO:0106310">
    <property type="term" value="F:protein serine kinase activity"/>
    <property type="evidence" value="ECO:0007669"/>
    <property type="project" value="RHEA"/>
</dbReference>
<dbReference type="GO" id="GO:0004674">
    <property type="term" value="F:protein serine/threonine kinase activity"/>
    <property type="evidence" value="ECO:0007669"/>
    <property type="project" value="UniProtKB-KW"/>
</dbReference>
<dbReference type="GO" id="GO:0019222">
    <property type="term" value="P:regulation of metabolic process"/>
    <property type="evidence" value="ECO:0007669"/>
    <property type="project" value="UniProtKB-ARBA"/>
</dbReference>
<dbReference type="GO" id="GO:0046677">
    <property type="term" value="P:response to antibiotic"/>
    <property type="evidence" value="ECO:0007669"/>
    <property type="project" value="UniProtKB-KW"/>
</dbReference>
<dbReference type="CDD" id="cd14014">
    <property type="entry name" value="STKc_PknB_like"/>
    <property type="match status" value="1"/>
</dbReference>
<dbReference type="FunFam" id="1.10.510.10:FF:000306">
    <property type="entry name" value="Serine/threonine protein kinase"/>
    <property type="match status" value="1"/>
</dbReference>
<dbReference type="FunFam" id="1.25.40.10:FF:000318">
    <property type="entry name" value="Serine/threonine protein kinase"/>
    <property type="match status" value="1"/>
</dbReference>
<dbReference type="FunFam" id="3.30.200.20:FF:000205">
    <property type="entry name" value="Serine/threonine protein kinase"/>
    <property type="match status" value="1"/>
</dbReference>
<dbReference type="FunFam" id="1.25.40.10:FF:000824">
    <property type="entry name" value="Serine/threonine-protein kinase PknG"/>
    <property type="match status" value="1"/>
</dbReference>
<dbReference type="Gene3D" id="3.30.200.20">
    <property type="entry name" value="Phosphorylase Kinase, domain 1"/>
    <property type="match status" value="1"/>
</dbReference>
<dbReference type="Gene3D" id="1.25.40.10">
    <property type="entry name" value="Tetratricopeptide repeat domain"/>
    <property type="match status" value="2"/>
</dbReference>
<dbReference type="Gene3D" id="1.10.510.10">
    <property type="entry name" value="Transferase(Phosphotransferase) domain 1"/>
    <property type="match status" value="1"/>
</dbReference>
<dbReference type="InterPro" id="IPR011009">
    <property type="entry name" value="Kinase-like_dom_sf"/>
</dbReference>
<dbReference type="InterPro" id="IPR031634">
    <property type="entry name" value="PknG_rubred"/>
</dbReference>
<dbReference type="InterPro" id="IPR031636">
    <property type="entry name" value="PknG_TPR"/>
</dbReference>
<dbReference type="InterPro" id="IPR000719">
    <property type="entry name" value="Prot_kinase_dom"/>
</dbReference>
<dbReference type="InterPro" id="IPR008271">
    <property type="entry name" value="Ser/Thr_kinase_AS"/>
</dbReference>
<dbReference type="InterPro" id="IPR011990">
    <property type="entry name" value="TPR-like_helical_dom_sf"/>
</dbReference>
<dbReference type="PANTHER" id="PTHR24363">
    <property type="entry name" value="SERINE/THREONINE PROTEIN KINASE"/>
    <property type="match status" value="1"/>
</dbReference>
<dbReference type="PANTHER" id="PTHR24363:SF0">
    <property type="entry name" value="SERINE_THREONINE KINASE LIKE DOMAIN CONTAINING 1"/>
    <property type="match status" value="1"/>
</dbReference>
<dbReference type="Pfam" id="PF00069">
    <property type="entry name" value="Pkinase"/>
    <property type="match status" value="1"/>
</dbReference>
<dbReference type="Pfam" id="PF16919">
    <property type="entry name" value="PknG_rubred"/>
    <property type="match status" value="1"/>
</dbReference>
<dbReference type="Pfam" id="PF16918">
    <property type="entry name" value="PknG_TPR"/>
    <property type="match status" value="1"/>
</dbReference>
<dbReference type="SMART" id="SM00220">
    <property type="entry name" value="S_TKc"/>
    <property type="match status" value="1"/>
</dbReference>
<dbReference type="SUPFAM" id="SSF56112">
    <property type="entry name" value="Protein kinase-like (PK-like)"/>
    <property type="match status" value="1"/>
</dbReference>
<dbReference type="SUPFAM" id="SSF48452">
    <property type="entry name" value="TPR-like"/>
    <property type="match status" value="1"/>
</dbReference>
<dbReference type="PROSITE" id="PS50011">
    <property type="entry name" value="PROTEIN_KINASE_DOM"/>
    <property type="match status" value="1"/>
</dbReference>
<dbReference type="PROSITE" id="PS00108">
    <property type="entry name" value="PROTEIN_KINASE_ST"/>
    <property type="match status" value="1"/>
</dbReference>
<feature type="chain" id="PRO_0000428057" description="Serine/threonine-protein kinase PknG">
    <location>
        <begin position="1"/>
        <end position="750"/>
    </location>
</feature>
<feature type="domain" description="Protein kinase" evidence="2">
    <location>
        <begin position="151"/>
        <end position="396"/>
    </location>
</feature>
<feature type="repeat" description="TPR">
    <location>
        <begin position="536"/>
        <end position="569"/>
    </location>
</feature>
<feature type="region of interest" description="Disordered" evidence="4">
    <location>
        <begin position="1"/>
        <end position="66"/>
    </location>
</feature>
<feature type="compositionally biased region" description="Polar residues" evidence="4">
    <location>
        <begin position="17"/>
        <end position="34"/>
    </location>
</feature>
<feature type="active site" description="Proton acceptor" evidence="2 3">
    <location>
        <position position="276"/>
    </location>
</feature>
<feature type="binding site" evidence="2">
    <location>
        <begin position="157"/>
        <end position="165"/>
    </location>
    <ligand>
        <name>ATP</name>
        <dbReference type="ChEBI" id="CHEBI:30616"/>
    </ligand>
</feature>
<feature type="binding site" evidence="2">
    <location>
        <position position="181"/>
    </location>
    <ligand>
        <name>ATP</name>
        <dbReference type="ChEBI" id="CHEBI:30616"/>
    </ligand>
</feature>
<feature type="modified residue" description="Phosphothreonine" evidence="1">
    <location>
        <position position="63"/>
    </location>
</feature>